<organism>
    <name type="scientific">Leuconostoc mesenteroides subsp. mesenteroides (strain ATCC 8293 / DSM 20343 / BCRC 11652 / CCM 1803 / JCM 6124 / NCDO 523 / NBRC 100496 / NCIMB 8023 / NCTC 12954 / NRRL B-1118 / 37Y)</name>
    <dbReference type="NCBI Taxonomy" id="203120"/>
    <lineage>
        <taxon>Bacteria</taxon>
        <taxon>Bacillati</taxon>
        <taxon>Bacillota</taxon>
        <taxon>Bacilli</taxon>
        <taxon>Lactobacillales</taxon>
        <taxon>Lactobacillaceae</taxon>
        <taxon>Leuconostoc</taxon>
    </lineage>
</organism>
<name>FTSH_LEUMM</name>
<feature type="chain" id="PRO_0000400350" description="ATP-dependent zinc metalloprotease FtsH">
    <location>
        <begin position="1"/>
        <end position="700"/>
    </location>
</feature>
<feature type="topological domain" description="Cytoplasmic" evidence="1">
    <location>
        <begin position="1"/>
        <end position="10"/>
    </location>
</feature>
<feature type="transmembrane region" description="Helical" evidence="1">
    <location>
        <begin position="11"/>
        <end position="31"/>
    </location>
</feature>
<feature type="topological domain" description="Extracellular" evidence="1">
    <location>
        <begin position="32"/>
        <end position="130"/>
    </location>
</feature>
<feature type="transmembrane region" description="Helical" evidence="1">
    <location>
        <begin position="131"/>
        <end position="151"/>
    </location>
</feature>
<feature type="topological domain" description="Cytoplasmic" evidence="1">
    <location>
        <begin position="152"/>
        <end position="700"/>
    </location>
</feature>
<feature type="region of interest" description="Disordered" evidence="2">
    <location>
        <begin position="644"/>
        <end position="700"/>
    </location>
</feature>
<feature type="active site" evidence="1">
    <location>
        <position position="450"/>
    </location>
</feature>
<feature type="binding site" evidence="1">
    <location>
        <begin position="227"/>
        <end position="234"/>
    </location>
    <ligand>
        <name>ATP</name>
        <dbReference type="ChEBI" id="CHEBI:30616"/>
    </ligand>
</feature>
<feature type="binding site" evidence="1">
    <location>
        <position position="449"/>
    </location>
    <ligand>
        <name>Zn(2+)</name>
        <dbReference type="ChEBI" id="CHEBI:29105"/>
        <note>catalytic</note>
    </ligand>
</feature>
<feature type="binding site" evidence="1">
    <location>
        <position position="453"/>
    </location>
    <ligand>
        <name>Zn(2+)</name>
        <dbReference type="ChEBI" id="CHEBI:29105"/>
        <note>catalytic</note>
    </ligand>
</feature>
<feature type="binding site" evidence="1">
    <location>
        <position position="525"/>
    </location>
    <ligand>
        <name>Zn(2+)</name>
        <dbReference type="ChEBI" id="CHEBI:29105"/>
        <note>catalytic</note>
    </ligand>
</feature>
<protein>
    <recommendedName>
        <fullName evidence="1">ATP-dependent zinc metalloprotease FtsH</fullName>
        <ecNumber evidence="1">3.4.24.-</ecNumber>
    </recommendedName>
</protein>
<accession>Q03Z46</accession>
<comment type="function">
    <text evidence="1">Acts as a processive, ATP-dependent zinc metallopeptidase for both cytoplasmic and membrane proteins. Plays a role in the quality control of integral membrane proteins.</text>
</comment>
<comment type="cofactor">
    <cofactor evidence="1">
        <name>Zn(2+)</name>
        <dbReference type="ChEBI" id="CHEBI:29105"/>
    </cofactor>
    <text evidence="1">Binds 1 zinc ion per subunit.</text>
</comment>
<comment type="subunit">
    <text evidence="1">Homohexamer.</text>
</comment>
<comment type="subcellular location">
    <subcellularLocation>
        <location evidence="1">Cell membrane</location>
        <topology evidence="1">Multi-pass membrane protein</topology>
        <orientation evidence="1">Cytoplasmic side</orientation>
    </subcellularLocation>
</comment>
<comment type="similarity">
    <text evidence="1">In the central section; belongs to the AAA ATPase family.</text>
</comment>
<comment type="similarity">
    <text evidence="1">In the C-terminal section; belongs to the peptidase M41 family.</text>
</comment>
<evidence type="ECO:0000255" key="1">
    <source>
        <dbReference type="HAMAP-Rule" id="MF_01458"/>
    </source>
</evidence>
<evidence type="ECO:0000256" key="2">
    <source>
        <dbReference type="SAM" id="MobiDB-lite"/>
    </source>
</evidence>
<gene>
    <name evidence="1" type="primary">ftsH</name>
    <name type="ordered locus">LEUM_0404</name>
</gene>
<dbReference type="EC" id="3.4.24.-" evidence="1"/>
<dbReference type="EMBL" id="CP000414">
    <property type="protein sequence ID" value="ABJ61526.1"/>
    <property type="molecule type" value="Genomic_DNA"/>
</dbReference>
<dbReference type="RefSeq" id="WP_011679262.1">
    <property type="nucleotide sequence ID" value="NC_008531.1"/>
</dbReference>
<dbReference type="SMR" id="Q03Z46"/>
<dbReference type="EnsemblBacteria" id="ABJ61526">
    <property type="protein sequence ID" value="ABJ61526"/>
    <property type="gene ID" value="LEUM_0404"/>
</dbReference>
<dbReference type="GeneID" id="29577232"/>
<dbReference type="KEGG" id="lme:LEUM_0404"/>
<dbReference type="eggNOG" id="COG0465">
    <property type="taxonomic scope" value="Bacteria"/>
</dbReference>
<dbReference type="HOGENOM" id="CLU_000688_16_2_9"/>
<dbReference type="Proteomes" id="UP000000362">
    <property type="component" value="Chromosome"/>
</dbReference>
<dbReference type="GO" id="GO:0005886">
    <property type="term" value="C:plasma membrane"/>
    <property type="evidence" value="ECO:0007669"/>
    <property type="project" value="UniProtKB-SubCell"/>
</dbReference>
<dbReference type="GO" id="GO:0005524">
    <property type="term" value="F:ATP binding"/>
    <property type="evidence" value="ECO:0007669"/>
    <property type="project" value="UniProtKB-UniRule"/>
</dbReference>
<dbReference type="GO" id="GO:0016887">
    <property type="term" value="F:ATP hydrolysis activity"/>
    <property type="evidence" value="ECO:0007669"/>
    <property type="project" value="UniProtKB-UniRule"/>
</dbReference>
<dbReference type="GO" id="GO:0004176">
    <property type="term" value="F:ATP-dependent peptidase activity"/>
    <property type="evidence" value="ECO:0007669"/>
    <property type="project" value="InterPro"/>
</dbReference>
<dbReference type="GO" id="GO:0004222">
    <property type="term" value="F:metalloendopeptidase activity"/>
    <property type="evidence" value="ECO:0007669"/>
    <property type="project" value="InterPro"/>
</dbReference>
<dbReference type="GO" id="GO:0008270">
    <property type="term" value="F:zinc ion binding"/>
    <property type="evidence" value="ECO:0007669"/>
    <property type="project" value="UniProtKB-UniRule"/>
</dbReference>
<dbReference type="GO" id="GO:0030163">
    <property type="term" value="P:protein catabolic process"/>
    <property type="evidence" value="ECO:0007669"/>
    <property type="project" value="UniProtKB-UniRule"/>
</dbReference>
<dbReference type="GO" id="GO:0006508">
    <property type="term" value="P:proteolysis"/>
    <property type="evidence" value="ECO:0007669"/>
    <property type="project" value="UniProtKB-KW"/>
</dbReference>
<dbReference type="CDD" id="cd19501">
    <property type="entry name" value="RecA-like_FtsH"/>
    <property type="match status" value="1"/>
</dbReference>
<dbReference type="FunFam" id="1.10.8.60:FF:000001">
    <property type="entry name" value="ATP-dependent zinc metalloprotease FtsH"/>
    <property type="match status" value="1"/>
</dbReference>
<dbReference type="FunFam" id="1.20.58.760:FF:000001">
    <property type="entry name" value="ATP-dependent zinc metalloprotease FtsH"/>
    <property type="match status" value="1"/>
</dbReference>
<dbReference type="FunFam" id="3.40.50.300:FF:000001">
    <property type="entry name" value="ATP-dependent zinc metalloprotease FtsH"/>
    <property type="match status" value="1"/>
</dbReference>
<dbReference type="Gene3D" id="1.10.8.60">
    <property type="match status" value="1"/>
</dbReference>
<dbReference type="Gene3D" id="3.40.50.300">
    <property type="entry name" value="P-loop containing nucleotide triphosphate hydrolases"/>
    <property type="match status" value="1"/>
</dbReference>
<dbReference type="Gene3D" id="1.20.58.760">
    <property type="entry name" value="Peptidase M41"/>
    <property type="match status" value="1"/>
</dbReference>
<dbReference type="HAMAP" id="MF_01458">
    <property type="entry name" value="FtsH"/>
    <property type="match status" value="1"/>
</dbReference>
<dbReference type="InterPro" id="IPR003593">
    <property type="entry name" value="AAA+_ATPase"/>
</dbReference>
<dbReference type="InterPro" id="IPR041569">
    <property type="entry name" value="AAA_lid_3"/>
</dbReference>
<dbReference type="InterPro" id="IPR003959">
    <property type="entry name" value="ATPase_AAA_core"/>
</dbReference>
<dbReference type="InterPro" id="IPR005936">
    <property type="entry name" value="FtsH"/>
</dbReference>
<dbReference type="InterPro" id="IPR027417">
    <property type="entry name" value="P-loop_NTPase"/>
</dbReference>
<dbReference type="InterPro" id="IPR011546">
    <property type="entry name" value="Pept_M41_FtsH_extracell"/>
</dbReference>
<dbReference type="InterPro" id="IPR000642">
    <property type="entry name" value="Peptidase_M41"/>
</dbReference>
<dbReference type="InterPro" id="IPR037219">
    <property type="entry name" value="Peptidase_M41-like"/>
</dbReference>
<dbReference type="NCBIfam" id="TIGR01241">
    <property type="entry name" value="FtsH_fam"/>
    <property type="match status" value="1"/>
</dbReference>
<dbReference type="PANTHER" id="PTHR23076:SF113">
    <property type="entry name" value="ATP-DEPENDENT ZINC METALLOPROTEASE FTSH 1, CHLOROPLASTIC-RELATED"/>
    <property type="match status" value="1"/>
</dbReference>
<dbReference type="PANTHER" id="PTHR23076">
    <property type="entry name" value="METALLOPROTEASE M41 FTSH"/>
    <property type="match status" value="1"/>
</dbReference>
<dbReference type="Pfam" id="PF00004">
    <property type="entry name" value="AAA"/>
    <property type="match status" value="1"/>
</dbReference>
<dbReference type="Pfam" id="PF17862">
    <property type="entry name" value="AAA_lid_3"/>
    <property type="match status" value="1"/>
</dbReference>
<dbReference type="Pfam" id="PF06480">
    <property type="entry name" value="FtsH_ext"/>
    <property type="match status" value="1"/>
</dbReference>
<dbReference type="Pfam" id="PF01434">
    <property type="entry name" value="Peptidase_M41"/>
    <property type="match status" value="1"/>
</dbReference>
<dbReference type="SMART" id="SM00382">
    <property type="entry name" value="AAA"/>
    <property type="match status" value="1"/>
</dbReference>
<dbReference type="SUPFAM" id="SSF140990">
    <property type="entry name" value="FtsH protease domain-like"/>
    <property type="match status" value="1"/>
</dbReference>
<dbReference type="SUPFAM" id="SSF52540">
    <property type="entry name" value="P-loop containing nucleoside triphosphate hydrolases"/>
    <property type="match status" value="1"/>
</dbReference>
<proteinExistence type="inferred from homology"/>
<reference key="1">
    <citation type="journal article" date="2006" name="Proc. Natl. Acad. Sci. U.S.A.">
        <title>Comparative genomics of the lactic acid bacteria.</title>
        <authorList>
            <person name="Makarova K.S."/>
            <person name="Slesarev A."/>
            <person name="Wolf Y.I."/>
            <person name="Sorokin A."/>
            <person name="Mirkin B."/>
            <person name="Koonin E.V."/>
            <person name="Pavlov A."/>
            <person name="Pavlova N."/>
            <person name="Karamychev V."/>
            <person name="Polouchine N."/>
            <person name="Shakhova V."/>
            <person name="Grigoriev I."/>
            <person name="Lou Y."/>
            <person name="Rohksar D."/>
            <person name="Lucas S."/>
            <person name="Huang K."/>
            <person name="Goodstein D.M."/>
            <person name="Hawkins T."/>
            <person name="Plengvidhya V."/>
            <person name="Welker D."/>
            <person name="Hughes J."/>
            <person name="Goh Y."/>
            <person name="Benson A."/>
            <person name="Baldwin K."/>
            <person name="Lee J.-H."/>
            <person name="Diaz-Muniz I."/>
            <person name="Dosti B."/>
            <person name="Smeianov V."/>
            <person name="Wechter W."/>
            <person name="Barabote R."/>
            <person name="Lorca G."/>
            <person name="Altermann E."/>
            <person name="Barrangou R."/>
            <person name="Ganesan B."/>
            <person name="Xie Y."/>
            <person name="Rawsthorne H."/>
            <person name="Tamir D."/>
            <person name="Parker C."/>
            <person name="Breidt F."/>
            <person name="Broadbent J.R."/>
            <person name="Hutkins R."/>
            <person name="O'Sullivan D."/>
            <person name="Steele J."/>
            <person name="Unlu G."/>
            <person name="Saier M.H. Jr."/>
            <person name="Klaenhammer T."/>
            <person name="Richardson P."/>
            <person name="Kozyavkin S."/>
            <person name="Weimer B.C."/>
            <person name="Mills D.A."/>
        </authorList>
    </citation>
    <scope>NUCLEOTIDE SEQUENCE [LARGE SCALE GENOMIC DNA]</scope>
    <source>
        <strain>ATCC 8293 / DSM 20343 / BCRC 11652 / CCM 1803 / JCM 6124 / NCDO 523 / NBRC 100496 / NCIMB 8023 / NCTC 12954 / NRRL B-1118 / 37Y</strain>
    </source>
</reference>
<sequence length="700" mass="76011">MNNNKGGFLRSSVFYIFIFLAVVGMVYGLFGNDKTTTKTITSSEFIKALNDKELKSVTVQPGNSIYNVTGTYKKAQTATKDKGLSLFQPTQKVTKFTSTLLPNDASLKSVTDAATKTKTELVTKQAENSGFWLNLLVSLVPVLLIVAVFYLMMNQAGGGKGGQGGMMSFGKSKAKPSDPKDNKVRFADVAGAEEEKQELVEVVEFLKAPKKFVNLGARIPKGVLLEGPPGTGKTLLAKAVAGEASVPFFSMSGSDFVEMFVGVGASRVRDLFENAKKSAPAIIFIDEIDAVGRRRGTGMGGGNDEREQTLNQILIEMDGFEGSEGVIILASTNRSDVLDPALLRSGRFDRKILVGAPDVKGREAILNVHAKNKPLADNVDLKAIAQQTPGYVGADLENLLNEAALLAARRNKSKVDAADIDEAEDRIFQGPAKTNHNMSESERRTTAYHEAGHALVGLVRSEASVVRKVTIVPRGRIGGYALMTPKNDRYNLKYSEAKEQLAGLMGGRASEIFMFNEASSGASNDFQQATGLARQMVTAFGMSDKLGMVQLEGNASVGYADQAGNRAYSEETARLIDEEVRRLAREAFDDAIAILRDNKDKLTAIAEALLEVETLDEKQIKDIYLTGTFTRKDIQDDTELAKAKSFEEAKAAADAKDSQAEQRFEKQDEEKSSDDHSESKNEDTDSTDKSETDDNNTENK</sequence>
<keyword id="KW-0067">ATP-binding</keyword>
<keyword id="KW-1003">Cell membrane</keyword>
<keyword id="KW-0378">Hydrolase</keyword>
<keyword id="KW-0472">Membrane</keyword>
<keyword id="KW-0479">Metal-binding</keyword>
<keyword id="KW-0482">Metalloprotease</keyword>
<keyword id="KW-0547">Nucleotide-binding</keyword>
<keyword id="KW-0645">Protease</keyword>
<keyword id="KW-1185">Reference proteome</keyword>
<keyword id="KW-0812">Transmembrane</keyword>
<keyword id="KW-1133">Transmembrane helix</keyword>
<keyword id="KW-0862">Zinc</keyword>